<dbReference type="EMBL" id="AM270034">
    <property type="protein sequence ID" value="CAK44508.1"/>
    <property type="molecule type" value="Genomic_DNA"/>
</dbReference>
<dbReference type="SMR" id="A2QEV8"/>
<dbReference type="Proteomes" id="UP000006706">
    <property type="component" value="Chromosome 4R"/>
</dbReference>
<dbReference type="GO" id="GO:0016282">
    <property type="term" value="C:eukaryotic 43S preinitiation complex"/>
    <property type="evidence" value="ECO:0007669"/>
    <property type="project" value="UniProtKB-UniRule"/>
</dbReference>
<dbReference type="GO" id="GO:0033290">
    <property type="term" value="C:eukaryotic 48S preinitiation complex"/>
    <property type="evidence" value="ECO:0007669"/>
    <property type="project" value="UniProtKB-UniRule"/>
</dbReference>
<dbReference type="GO" id="GO:0071541">
    <property type="term" value="C:eukaryotic translation initiation factor 3 complex, eIF3m"/>
    <property type="evidence" value="ECO:0007669"/>
    <property type="project" value="TreeGrafter"/>
</dbReference>
<dbReference type="GO" id="GO:0003723">
    <property type="term" value="F:RNA binding"/>
    <property type="evidence" value="ECO:0007669"/>
    <property type="project" value="TreeGrafter"/>
</dbReference>
<dbReference type="GO" id="GO:0003743">
    <property type="term" value="F:translation initiation factor activity"/>
    <property type="evidence" value="ECO:0007669"/>
    <property type="project" value="UniProtKB-UniRule"/>
</dbReference>
<dbReference type="GO" id="GO:0001732">
    <property type="term" value="P:formation of cytoplasmic translation initiation complex"/>
    <property type="evidence" value="ECO:0007669"/>
    <property type="project" value="UniProtKB-UniRule"/>
</dbReference>
<dbReference type="FunFam" id="2.130.10.10:FF:000127">
    <property type="entry name" value="Eukaryotic translation initiation factor 3 subunit I"/>
    <property type="match status" value="1"/>
</dbReference>
<dbReference type="Gene3D" id="2.130.10.10">
    <property type="entry name" value="YVTN repeat-like/Quinoprotein amine dehydrogenase"/>
    <property type="match status" value="1"/>
</dbReference>
<dbReference type="HAMAP" id="MF_03008">
    <property type="entry name" value="eIF3i"/>
    <property type="match status" value="1"/>
</dbReference>
<dbReference type="InterPro" id="IPR027525">
    <property type="entry name" value="eIF3i"/>
</dbReference>
<dbReference type="InterPro" id="IPR015943">
    <property type="entry name" value="WD40/YVTN_repeat-like_dom_sf"/>
</dbReference>
<dbReference type="InterPro" id="IPR019775">
    <property type="entry name" value="WD40_repeat_CS"/>
</dbReference>
<dbReference type="InterPro" id="IPR036322">
    <property type="entry name" value="WD40_repeat_dom_sf"/>
</dbReference>
<dbReference type="InterPro" id="IPR001680">
    <property type="entry name" value="WD40_rpt"/>
</dbReference>
<dbReference type="PANTHER" id="PTHR19877">
    <property type="entry name" value="EUKARYOTIC TRANSLATION INITIATION FACTOR 3 SUBUNIT I"/>
    <property type="match status" value="1"/>
</dbReference>
<dbReference type="PANTHER" id="PTHR19877:SF1">
    <property type="entry name" value="EUKARYOTIC TRANSLATION INITIATION FACTOR 3 SUBUNIT I"/>
    <property type="match status" value="1"/>
</dbReference>
<dbReference type="Pfam" id="PF24805">
    <property type="entry name" value="EIF3I"/>
    <property type="match status" value="1"/>
</dbReference>
<dbReference type="SMART" id="SM00320">
    <property type="entry name" value="WD40"/>
    <property type="match status" value="5"/>
</dbReference>
<dbReference type="SUPFAM" id="SSF50978">
    <property type="entry name" value="WD40 repeat-like"/>
    <property type="match status" value="1"/>
</dbReference>
<dbReference type="PROSITE" id="PS00678">
    <property type="entry name" value="WD_REPEATS_1"/>
    <property type="match status" value="1"/>
</dbReference>
<dbReference type="PROSITE" id="PS50082">
    <property type="entry name" value="WD_REPEATS_2"/>
    <property type="match status" value="3"/>
</dbReference>
<dbReference type="PROSITE" id="PS50294">
    <property type="entry name" value="WD_REPEATS_REGION"/>
    <property type="match status" value="2"/>
</dbReference>
<gene>
    <name type="primary">tif34</name>
    <name type="ORF">An02g12410</name>
</gene>
<evidence type="ECO:0000255" key="1">
    <source>
        <dbReference type="HAMAP-Rule" id="MF_03008"/>
    </source>
</evidence>
<accession>A2QEV8</accession>
<comment type="function">
    <text evidence="1">Component of the eukaryotic translation initiation factor 3 (eIF-3) complex, which is involved in protein synthesis of a specialized repertoire of mRNAs and, together with other initiation factors, stimulates binding of mRNA and methionyl-tRNAi to the 40S ribosome. The eIF-3 complex specifically targets and initiates translation of a subset of mRNAs involved in cell proliferation.</text>
</comment>
<comment type="subunit">
    <text evidence="1">Component of the eukaryotic translation initiation factor 3 (eIF-3) complex.</text>
</comment>
<comment type="subcellular location">
    <subcellularLocation>
        <location evidence="1">Cytoplasm</location>
    </subcellularLocation>
</comment>
<comment type="similarity">
    <text evidence="1">Belongs to the eIF-3 subunit I family.</text>
</comment>
<feature type="chain" id="PRO_0000365358" description="Eukaryotic translation initiation factor 3 subunit I">
    <location>
        <begin position="1"/>
        <end position="337"/>
    </location>
</feature>
<feature type="repeat" description="WD 1">
    <location>
        <begin position="8"/>
        <end position="47"/>
    </location>
</feature>
<feature type="repeat" description="WD 2">
    <location>
        <begin position="50"/>
        <end position="91"/>
    </location>
</feature>
<feature type="repeat" description="WD 3">
    <location>
        <begin position="147"/>
        <end position="186"/>
    </location>
</feature>
<feature type="repeat" description="WD 4">
    <location>
        <begin position="191"/>
        <end position="230"/>
    </location>
</feature>
<feature type="repeat" description="WD 5">
    <location>
        <begin position="288"/>
        <end position="327"/>
    </location>
</feature>
<protein>
    <recommendedName>
        <fullName evidence="1">Eukaryotic translation initiation factor 3 subunit I</fullName>
        <shortName evidence="1">eIF3i</shortName>
    </recommendedName>
    <alternativeName>
        <fullName evidence="1">Eukaryotic translation initiation factor 3 39 kDa subunit homolog</fullName>
        <shortName evidence="1">eIF-3 39 kDa subunit homolog</shortName>
    </alternativeName>
</protein>
<sequence length="337" mass="37789">MRPILLSGHERSLNQIKFNRDGDLIFSVAKDKIVCAWWSANGERLGTYNGHQGAIWTVDVSPNTQILATGSADNTVRLWNVKTGECIKVWDFPTAVKRVRVHPPMEADCWPVTEKRMGFLGTIAVLDINYGENLTEQAEEPSLRITCTESKATVAGWSYMGKYIIAGHEDGSVSQYDGKTGEQLENVQAHEFDHQINDIQFSADRTYFITASKDKSAKLMSTRNLAILKTYVADTPLNSATITPKKDYVILGGGQAAMDVTTTSARQGKFEARFYHKVFEDEIGRVRGHFGPLNTVHIHPAGTAYASGGEDGYVRVHHFDKPYFDFMYEVEREQLRK</sequence>
<reference key="1">
    <citation type="journal article" date="2007" name="Nat. Biotechnol.">
        <title>Genome sequencing and analysis of the versatile cell factory Aspergillus niger CBS 513.88.</title>
        <authorList>
            <person name="Pel H.J."/>
            <person name="de Winde J.H."/>
            <person name="Archer D.B."/>
            <person name="Dyer P.S."/>
            <person name="Hofmann G."/>
            <person name="Schaap P.J."/>
            <person name="Turner G."/>
            <person name="de Vries R.P."/>
            <person name="Albang R."/>
            <person name="Albermann K."/>
            <person name="Andersen M.R."/>
            <person name="Bendtsen J.D."/>
            <person name="Benen J.A.E."/>
            <person name="van den Berg M."/>
            <person name="Breestraat S."/>
            <person name="Caddick M.X."/>
            <person name="Contreras R."/>
            <person name="Cornell M."/>
            <person name="Coutinho P.M."/>
            <person name="Danchin E.G.J."/>
            <person name="Debets A.J.M."/>
            <person name="Dekker P."/>
            <person name="van Dijck P.W.M."/>
            <person name="van Dijk A."/>
            <person name="Dijkhuizen L."/>
            <person name="Driessen A.J.M."/>
            <person name="d'Enfert C."/>
            <person name="Geysens S."/>
            <person name="Goosen C."/>
            <person name="Groot G.S.P."/>
            <person name="de Groot P.W.J."/>
            <person name="Guillemette T."/>
            <person name="Henrissat B."/>
            <person name="Herweijer M."/>
            <person name="van den Hombergh J.P.T.W."/>
            <person name="van den Hondel C.A.M.J.J."/>
            <person name="van der Heijden R.T.J.M."/>
            <person name="van der Kaaij R.M."/>
            <person name="Klis F.M."/>
            <person name="Kools H.J."/>
            <person name="Kubicek C.P."/>
            <person name="van Kuyk P.A."/>
            <person name="Lauber J."/>
            <person name="Lu X."/>
            <person name="van der Maarel M.J.E.C."/>
            <person name="Meulenberg R."/>
            <person name="Menke H."/>
            <person name="Mortimer M.A."/>
            <person name="Nielsen J."/>
            <person name="Oliver S.G."/>
            <person name="Olsthoorn M."/>
            <person name="Pal K."/>
            <person name="van Peij N.N.M.E."/>
            <person name="Ram A.F.J."/>
            <person name="Rinas U."/>
            <person name="Roubos J.A."/>
            <person name="Sagt C.M.J."/>
            <person name="Schmoll M."/>
            <person name="Sun J."/>
            <person name="Ussery D."/>
            <person name="Varga J."/>
            <person name="Vervecken W."/>
            <person name="van de Vondervoort P.J.J."/>
            <person name="Wedler H."/>
            <person name="Woesten H.A.B."/>
            <person name="Zeng A.-P."/>
            <person name="van Ooyen A.J.J."/>
            <person name="Visser J."/>
            <person name="Stam H."/>
        </authorList>
    </citation>
    <scope>NUCLEOTIDE SEQUENCE [LARGE SCALE GENOMIC DNA]</scope>
    <source>
        <strain>ATCC MYA-4892 / CBS 513.88 / FGSC A1513</strain>
    </source>
</reference>
<keyword id="KW-0963">Cytoplasm</keyword>
<keyword id="KW-0396">Initiation factor</keyword>
<keyword id="KW-0648">Protein biosynthesis</keyword>
<keyword id="KW-1185">Reference proteome</keyword>
<keyword id="KW-0677">Repeat</keyword>
<keyword id="KW-0853">WD repeat</keyword>
<organism>
    <name type="scientific">Aspergillus niger (strain ATCC MYA-4892 / CBS 513.88 / FGSC A1513)</name>
    <dbReference type="NCBI Taxonomy" id="425011"/>
    <lineage>
        <taxon>Eukaryota</taxon>
        <taxon>Fungi</taxon>
        <taxon>Dikarya</taxon>
        <taxon>Ascomycota</taxon>
        <taxon>Pezizomycotina</taxon>
        <taxon>Eurotiomycetes</taxon>
        <taxon>Eurotiomycetidae</taxon>
        <taxon>Eurotiales</taxon>
        <taxon>Aspergillaceae</taxon>
        <taxon>Aspergillus</taxon>
        <taxon>Aspergillus subgen. Circumdati</taxon>
    </lineage>
</organism>
<proteinExistence type="inferred from homology"/>
<name>EIF3I_ASPNC</name>